<reference key="1">
    <citation type="journal article" date="2000" name="DNA Res.">
        <title>Complete genome structure of the nitrogen-fixing symbiotic bacterium Mesorhizobium loti.</title>
        <authorList>
            <person name="Kaneko T."/>
            <person name="Nakamura Y."/>
            <person name="Sato S."/>
            <person name="Asamizu E."/>
            <person name="Kato T."/>
            <person name="Sasamoto S."/>
            <person name="Watanabe A."/>
            <person name="Idesawa K."/>
            <person name="Ishikawa A."/>
            <person name="Kawashima K."/>
            <person name="Kimura T."/>
            <person name="Kishida Y."/>
            <person name="Kiyokawa C."/>
            <person name="Kohara M."/>
            <person name="Matsumoto M."/>
            <person name="Matsuno A."/>
            <person name="Mochizuki Y."/>
            <person name="Nakayama S."/>
            <person name="Nakazaki N."/>
            <person name="Shimpo S."/>
            <person name="Sugimoto M."/>
            <person name="Takeuchi C."/>
            <person name="Yamada M."/>
            <person name="Tabata S."/>
        </authorList>
    </citation>
    <scope>NUCLEOTIDE SEQUENCE [LARGE SCALE GENOMIC DNA]</scope>
    <source>
        <strain>LMG 29417 / CECT 9101 / MAFF 303099</strain>
    </source>
</reference>
<organism>
    <name type="scientific">Mesorhizobium japonicum (strain LMG 29417 / CECT 9101 / MAFF 303099)</name>
    <name type="common">Mesorhizobium loti (strain MAFF 303099)</name>
    <dbReference type="NCBI Taxonomy" id="266835"/>
    <lineage>
        <taxon>Bacteria</taxon>
        <taxon>Pseudomonadati</taxon>
        <taxon>Pseudomonadota</taxon>
        <taxon>Alphaproteobacteria</taxon>
        <taxon>Hyphomicrobiales</taxon>
        <taxon>Phyllobacteriaceae</taxon>
        <taxon>Mesorhizobium</taxon>
    </lineage>
</organism>
<evidence type="ECO:0000250" key="1"/>
<evidence type="ECO:0000255" key="2"/>
<evidence type="ECO:0000305" key="3"/>
<proteinExistence type="inferred from homology"/>
<gene>
    <name type="primary">dadA1</name>
    <name type="ordered locus">mll3992</name>
</gene>
<keyword id="KW-0274">FAD</keyword>
<keyword id="KW-0285">Flavoprotein</keyword>
<keyword id="KW-0560">Oxidoreductase</keyword>
<sequence>MQIMVLGGGVIGVTTAYYLAEAGHEVTVLDRQKGPALETSFANAGEISPGYASPWAGPGIPLKAIKWLLMKHGPLVVRPAFDPHMWTWLVKMLRNCTTERYAINKSRMVPLAEYSRDTLKALREATGITYDERTQGTLQLFRTQKQLDGTGGDVEVLKKYGVSYEILDQDGCIAAEPALGGVREKFVGGLRLPHDETGDCKMFTEKLAELCVARGVKFEYDTTIWRVLRSRNRVANLSTSKGFKASEAYVMALGSYSAGFMRRMKRSIPVYPVKGYSITVPIKDADVAPVSTVMDETYKVAITRLGDRIRVGGTAEISGFDLRLHESRRRTLEHSVGDLFPGAGAMREATFWCGLRPMTPDGPPLIGRTELSNLFLNTGHGTLGWTMACGSAKVLADIMSNKVPEIDARALAQERYLK</sequence>
<name>DADA1_RHILO</name>
<comment type="function">
    <text evidence="1">Oxidative deamination of D-amino acids.</text>
</comment>
<comment type="catalytic activity">
    <reaction>
        <text>a D-alpha-amino acid + A + H2O = a 2-oxocarboxylate + AH2 + NH4(+)</text>
        <dbReference type="Rhea" id="RHEA:18125"/>
        <dbReference type="ChEBI" id="CHEBI:13193"/>
        <dbReference type="ChEBI" id="CHEBI:15377"/>
        <dbReference type="ChEBI" id="CHEBI:17499"/>
        <dbReference type="ChEBI" id="CHEBI:28938"/>
        <dbReference type="ChEBI" id="CHEBI:35179"/>
        <dbReference type="ChEBI" id="CHEBI:59871"/>
    </reaction>
</comment>
<comment type="cofactor">
    <cofactor evidence="1">
        <name>FAD</name>
        <dbReference type="ChEBI" id="CHEBI:57692"/>
    </cofactor>
</comment>
<comment type="pathway">
    <text>Amino-acid degradation; D-alanine degradation; NH(3) and pyruvate from D-alanine: step 1/1.</text>
</comment>
<comment type="similarity">
    <text evidence="3">Belongs to the DadA oxidoreductase family.</text>
</comment>
<accession>Q98F08</accession>
<protein>
    <recommendedName>
        <fullName>D-amino acid dehydrogenase 1</fullName>
        <ecNumber>1.4.99.-</ecNumber>
    </recommendedName>
</protein>
<dbReference type="EC" id="1.4.99.-"/>
<dbReference type="EMBL" id="BA000012">
    <property type="protein sequence ID" value="BAB50759.1"/>
    <property type="molecule type" value="Genomic_DNA"/>
</dbReference>
<dbReference type="RefSeq" id="WP_010912102.1">
    <property type="nucleotide sequence ID" value="NC_002678.2"/>
</dbReference>
<dbReference type="SMR" id="Q98F08"/>
<dbReference type="KEGG" id="mlo:mll3992"/>
<dbReference type="PATRIC" id="fig|266835.9.peg.3170"/>
<dbReference type="eggNOG" id="COG0665">
    <property type="taxonomic scope" value="Bacteria"/>
</dbReference>
<dbReference type="HOGENOM" id="CLU_007884_9_2_5"/>
<dbReference type="UniPathway" id="UPA00043">
    <property type="reaction ID" value="UER00498"/>
</dbReference>
<dbReference type="Proteomes" id="UP000000552">
    <property type="component" value="Chromosome"/>
</dbReference>
<dbReference type="GO" id="GO:0005737">
    <property type="term" value="C:cytoplasm"/>
    <property type="evidence" value="ECO:0007669"/>
    <property type="project" value="TreeGrafter"/>
</dbReference>
<dbReference type="GO" id="GO:0005886">
    <property type="term" value="C:plasma membrane"/>
    <property type="evidence" value="ECO:0007669"/>
    <property type="project" value="TreeGrafter"/>
</dbReference>
<dbReference type="GO" id="GO:0008718">
    <property type="term" value="F:D-amino-acid dehydrogenase activity"/>
    <property type="evidence" value="ECO:0007669"/>
    <property type="project" value="UniProtKB-UniRule"/>
</dbReference>
<dbReference type="GO" id="GO:0055130">
    <property type="term" value="P:D-alanine catabolic process"/>
    <property type="evidence" value="ECO:0007669"/>
    <property type="project" value="UniProtKB-UniPathway"/>
</dbReference>
<dbReference type="FunFam" id="3.50.50.60:FF:000020">
    <property type="entry name" value="D-amino acid dehydrogenase"/>
    <property type="match status" value="1"/>
</dbReference>
<dbReference type="Gene3D" id="3.30.9.10">
    <property type="entry name" value="D-Amino Acid Oxidase, subunit A, domain 2"/>
    <property type="match status" value="1"/>
</dbReference>
<dbReference type="Gene3D" id="3.50.50.60">
    <property type="entry name" value="FAD/NAD(P)-binding domain"/>
    <property type="match status" value="2"/>
</dbReference>
<dbReference type="HAMAP" id="MF_01202">
    <property type="entry name" value="DadA"/>
    <property type="match status" value="1"/>
</dbReference>
<dbReference type="InterPro" id="IPR023080">
    <property type="entry name" value="DadA"/>
</dbReference>
<dbReference type="InterPro" id="IPR006076">
    <property type="entry name" value="FAD-dep_OxRdtase"/>
</dbReference>
<dbReference type="InterPro" id="IPR036188">
    <property type="entry name" value="FAD/NAD-bd_sf"/>
</dbReference>
<dbReference type="NCBIfam" id="NF001933">
    <property type="entry name" value="PRK00711.1"/>
    <property type="match status" value="1"/>
</dbReference>
<dbReference type="PANTHER" id="PTHR13847:SF280">
    <property type="entry name" value="D-AMINO ACID DEHYDROGENASE"/>
    <property type="match status" value="1"/>
</dbReference>
<dbReference type="PANTHER" id="PTHR13847">
    <property type="entry name" value="SARCOSINE DEHYDROGENASE-RELATED"/>
    <property type="match status" value="1"/>
</dbReference>
<dbReference type="Pfam" id="PF01266">
    <property type="entry name" value="DAO"/>
    <property type="match status" value="1"/>
</dbReference>
<dbReference type="SUPFAM" id="SSF54373">
    <property type="entry name" value="FAD-linked reductases, C-terminal domain"/>
    <property type="match status" value="1"/>
</dbReference>
<dbReference type="SUPFAM" id="SSF51905">
    <property type="entry name" value="FAD/NAD(P)-binding domain"/>
    <property type="match status" value="1"/>
</dbReference>
<feature type="chain" id="PRO_0000166145" description="D-amino acid dehydrogenase 1">
    <location>
        <begin position="1"/>
        <end position="418"/>
    </location>
</feature>
<feature type="binding site" evidence="2">
    <location>
        <begin position="3"/>
        <end position="17"/>
    </location>
    <ligand>
        <name>FAD</name>
        <dbReference type="ChEBI" id="CHEBI:57692"/>
    </ligand>
</feature>